<organism>
    <name type="scientific">Saccharomyces cerevisiae (strain ATCC 204508 / S288c)</name>
    <name type="common">Baker's yeast</name>
    <dbReference type="NCBI Taxonomy" id="559292"/>
    <lineage>
        <taxon>Eukaryota</taxon>
        <taxon>Fungi</taxon>
        <taxon>Dikarya</taxon>
        <taxon>Ascomycota</taxon>
        <taxon>Saccharomycotina</taxon>
        <taxon>Saccharomycetes</taxon>
        <taxon>Saccharomycetales</taxon>
        <taxon>Saccharomycetaceae</taxon>
        <taxon>Saccharomyces</taxon>
    </lineage>
</organism>
<comment type="subcellular location">
    <subcellularLocation>
        <location evidence="2">Membrane</location>
        <topology evidence="2">Multi-pass membrane protein</topology>
    </subcellularLocation>
</comment>
<comment type="miscellaneous">
    <text evidence="2">Partially overlaps KNS1.</text>
</comment>
<comment type="caution">
    <text evidence="3">Product of a dubious gene prediction unlikely to encode a functional protein. Because of that it is not part of the S.cerevisiae S288c complete/reference proteome set.</text>
</comment>
<feature type="chain" id="PRO_0000299602" description="Putative uncharacterized protein YLL020C">
    <location>
        <begin position="1"/>
        <end position="101"/>
    </location>
</feature>
<feature type="transmembrane region" description="Helical" evidence="1">
    <location>
        <begin position="35"/>
        <end position="55"/>
    </location>
</feature>
<feature type="transmembrane region" description="Helical" evidence="1">
    <location>
        <begin position="66"/>
        <end position="86"/>
    </location>
</feature>
<evidence type="ECO:0000255" key="1"/>
<evidence type="ECO:0000305" key="2"/>
<evidence type="ECO:0000305" key="3">
    <source>
    </source>
</evidence>
<sequence length="101" mass="11749">MNSIRKLSCFGTGSSIYSGKCLSSTQQKGLPQRTLWTMNGLIWAYWMMVLQLIIIPKDSGCSRSTFLFFFSHLLLVPFFFFLTLLFHFPVFNNISLNFYIQ</sequence>
<proteinExistence type="uncertain"/>
<accession>Q07811</accession>
<dbReference type="EMBL" id="Z73125">
    <property type="protein sequence ID" value="CAA97467.1"/>
    <property type="molecule type" value="Genomic_DNA"/>
</dbReference>
<dbReference type="PIR" id="S64768">
    <property type="entry name" value="S64768"/>
</dbReference>
<dbReference type="SMR" id="Q07811"/>
<dbReference type="DIP" id="DIP-3981N"/>
<dbReference type="IntAct" id="Q07811">
    <property type="interactions" value="1"/>
</dbReference>
<dbReference type="PaxDb" id="4932-YLL020C"/>
<dbReference type="EnsemblFungi" id="YLL020C_mRNA">
    <property type="protein sequence ID" value="YLL020C"/>
    <property type="gene ID" value="YLL020C"/>
</dbReference>
<dbReference type="AGR" id="SGD:S000003943"/>
<dbReference type="SGD" id="S000003943">
    <property type="gene designation" value="YLL020C"/>
</dbReference>
<dbReference type="HOGENOM" id="CLU_2428754_0_0_1"/>
<dbReference type="GO" id="GO:0016020">
    <property type="term" value="C:membrane"/>
    <property type="evidence" value="ECO:0007669"/>
    <property type="project" value="UniProtKB-SubCell"/>
</dbReference>
<name>YL020_YEAST</name>
<reference key="1">
    <citation type="journal article" date="1997" name="Nature">
        <title>The nucleotide sequence of Saccharomyces cerevisiae chromosome XII.</title>
        <authorList>
            <person name="Johnston M."/>
            <person name="Hillier L.W."/>
            <person name="Riles L."/>
            <person name="Albermann K."/>
            <person name="Andre B."/>
            <person name="Ansorge W."/>
            <person name="Benes V."/>
            <person name="Brueckner M."/>
            <person name="Delius H."/>
            <person name="Dubois E."/>
            <person name="Duesterhoeft A."/>
            <person name="Entian K.-D."/>
            <person name="Floeth M."/>
            <person name="Goffeau A."/>
            <person name="Hebling U."/>
            <person name="Heumann K."/>
            <person name="Heuss-Neitzel D."/>
            <person name="Hilbert H."/>
            <person name="Hilger F."/>
            <person name="Kleine K."/>
            <person name="Koetter P."/>
            <person name="Louis E.J."/>
            <person name="Messenguy F."/>
            <person name="Mewes H.-W."/>
            <person name="Miosga T."/>
            <person name="Moestl D."/>
            <person name="Mueller-Auer S."/>
            <person name="Nentwich U."/>
            <person name="Obermaier B."/>
            <person name="Piravandi E."/>
            <person name="Pohl T.M."/>
            <person name="Portetelle D."/>
            <person name="Purnelle B."/>
            <person name="Rechmann S."/>
            <person name="Rieger M."/>
            <person name="Rinke M."/>
            <person name="Rose M."/>
            <person name="Scharfe M."/>
            <person name="Scherens B."/>
            <person name="Scholler P."/>
            <person name="Schwager C."/>
            <person name="Schwarz S."/>
            <person name="Underwood A.P."/>
            <person name="Urrestarazu L.A."/>
            <person name="Vandenbol M."/>
            <person name="Verhasselt P."/>
            <person name="Vierendeels F."/>
            <person name="Voet M."/>
            <person name="Volckaert G."/>
            <person name="Voss H."/>
            <person name="Wambutt R."/>
            <person name="Wedler E."/>
            <person name="Wedler H."/>
            <person name="Zimmermann F.K."/>
            <person name="Zollner A."/>
            <person name="Hani J."/>
            <person name="Hoheisel J.D."/>
        </authorList>
    </citation>
    <scope>NUCLEOTIDE SEQUENCE [LARGE SCALE GENOMIC DNA]</scope>
    <source>
        <strain>ATCC 204508 / S288c</strain>
    </source>
</reference>
<reference key="2">
    <citation type="journal article" date="2014" name="G3 (Bethesda)">
        <title>The reference genome sequence of Saccharomyces cerevisiae: Then and now.</title>
        <authorList>
            <person name="Engel S.R."/>
            <person name="Dietrich F.S."/>
            <person name="Fisk D.G."/>
            <person name="Binkley G."/>
            <person name="Balakrishnan R."/>
            <person name="Costanzo M.C."/>
            <person name="Dwight S.S."/>
            <person name="Hitz B.C."/>
            <person name="Karra K."/>
            <person name="Nash R.S."/>
            <person name="Weng S."/>
            <person name="Wong E.D."/>
            <person name="Lloyd P."/>
            <person name="Skrzypek M.S."/>
            <person name="Miyasato S.R."/>
            <person name="Simison M."/>
            <person name="Cherry J.M."/>
        </authorList>
    </citation>
    <scope>GENOME REANNOTATION</scope>
    <source>
        <strain>ATCC 204508 / S288c</strain>
    </source>
</reference>
<keyword id="KW-0472">Membrane</keyword>
<keyword id="KW-0812">Transmembrane</keyword>
<keyword id="KW-1133">Transmembrane helix</keyword>
<gene>
    <name type="ordered locus">YLL020C</name>
    <name type="ORF">L1219</name>
</gene>
<protein>
    <recommendedName>
        <fullName>Putative uncharacterized protein YLL020C</fullName>
    </recommendedName>
</protein>